<comment type="function">
    <text evidence="1">Catalyzes the interconversion of 2-phosphoglycerate and 3-phosphoglycerate.</text>
</comment>
<comment type="catalytic activity">
    <reaction evidence="1">
        <text>(2R)-2-phosphoglycerate = (2R)-3-phosphoglycerate</text>
        <dbReference type="Rhea" id="RHEA:15901"/>
        <dbReference type="ChEBI" id="CHEBI:58272"/>
        <dbReference type="ChEBI" id="CHEBI:58289"/>
        <dbReference type="EC" id="5.4.2.11"/>
    </reaction>
</comment>
<comment type="pathway">
    <text evidence="1">Carbohydrate degradation; glycolysis; pyruvate from D-glyceraldehyde 3-phosphate: step 3/5.</text>
</comment>
<comment type="similarity">
    <text evidence="1">Belongs to the phosphoglycerate mutase family. BPG-dependent PGAM subfamily.</text>
</comment>
<dbReference type="EC" id="5.4.2.11" evidence="1"/>
<dbReference type="EMBL" id="AE017226">
    <property type="protein sequence ID" value="AAS12212.1"/>
    <property type="molecule type" value="Genomic_DNA"/>
</dbReference>
<dbReference type="RefSeq" id="NP_972301.1">
    <property type="nucleotide sequence ID" value="NC_002967.9"/>
</dbReference>
<dbReference type="RefSeq" id="WP_002670958.1">
    <property type="nucleotide sequence ID" value="NC_002967.9"/>
</dbReference>
<dbReference type="SMR" id="Q73M14"/>
<dbReference type="STRING" id="243275.TDE_1697"/>
<dbReference type="PaxDb" id="243275-TDE_1697"/>
<dbReference type="GeneID" id="2740869"/>
<dbReference type="KEGG" id="tde:TDE_1697"/>
<dbReference type="PATRIC" id="fig|243275.7.peg.1623"/>
<dbReference type="eggNOG" id="COG0588">
    <property type="taxonomic scope" value="Bacteria"/>
</dbReference>
<dbReference type="HOGENOM" id="CLU_033323_1_1_12"/>
<dbReference type="OrthoDB" id="9781415at2"/>
<dbReference type="UniPathway" id="UPA00109">
    <property type="reaction ID" value="UER00186"/>
</dbReference>
<dbReference type="Proteomes" id="UP000008212">
    <property type="component" value="Chromosome"/>
</dbReference>
<dbReference type="GO" id="GO:0004619">
    <property type="term" value="F:phosphoglycerate mutase activity"/>
    <property type="evidence" value="ECO:0007669"/>
    <property type="project" value="UniProtKB-EC"/>
</dbReference>
<dbReference type="GO" id="GO:0006094">
    <property type="term" value="P:gluconeogenesis"/>
    <property type="evidence" value="ECO:0007669"/>
    <property type="project" value="UniProtKB-UniRule"/>
</dbReference>
<dbReference type="GO" id="GO:0006096">
    <property type="term" value="P:glycolytic process"/>
    <property type="evidence" value="ECO:0007669"/>
    <property type="project" value="UniProtKB-UniRule"/>
</dbReference>
<dbReference type="CDD" id="cd07067">
    <property type="entry name" value="HP_PGM_like"/>
    <property type="match status" value="1"/>
</dbReference>
<dbReference type="FunFam" id="3.40.50.1240:FF:000003">
    <property type="entry name" value="2,3-bisphosphoglycerate-dependent phosphoglycerate mutase"/>
    <property type="match status" value="1"/>
</dbReference>
<dbReference type="Gene3D" id="3.40.50.1240">
    <property type="entry name" value="Phosphoglycerate mutase-like"/>
    <property type="match status" value="1"/>
</dbReference>
<dbReference type="HAMAP" id="MF_01039">
    <property type="entry name" value="PGAM_GpmA"/>
    <property type="match status" value="1"/>
</dbReference>
<dbReference type="InterPro" id="IPR013078">
    <property type="entry name" value="His_Pase_superF_clade-1"/>
</dbReference>
<dbReference type="InterPro" id="IPR029033">
    <property type="entry name" value="His_PPase_superfam"/>
</dbReference>
<dbReference type="InterPro" id="IPR001345">
    <property type="entry name" value="PG/BPGM_mutase_AS"/>
</dbReference>
<dbReference type="InterPro" id="IPR005952">
    <property type="entry name" value="Phosphogly_mut1"/>
</dbReference>
<dbReference type="NCBIfam" id="TIGR01258">
    <property type="entry name" value="pgm_1"/>
    <property type="match status" value="1"/>
</dbReference>
<dbReference type="NCBIfam" id="NF010713">
    <property type="entry name" value="PRK14115.1"/>
    <property type="match status" value="1"/>
</dbReference>
<dbReference type="PANTHER" id="PTHR11931">
    <property type="entry name" value="PHOSPHOGLYCERATE MUTASE"/>
    <property type="match status" value="1"/>
</dbReference>
<dbReference type="Pfam" id="PF00300">
    <property type="entry name" value="His_Phos_1"/>
    <property type="match status" value="2"/>
</dbReference>
<dbReference type="PIRSF" id="PIRSF000709">
    <property type="entry name" value="6PFK_2-Ptase"/>
    <property type="match status" value="1"/>
</dbReference>
<dbReference type="SMART" id="SM00855">
    <property type="entry name" value="PGAM"/>
    <property type="match status" value="1"/>
</dbReference>
<dbReference type="SUPFAM" id="SSF53254">
    <property type="entry name" value="Phosphoglycerate mutase-like"/>
    <property type="match status" value="1"/>
</dbReference>
<dbReference type="PROSITE" id="PS00175">
    <property type="entry name" value="PG_MUTASE"/>
    <property type="match status" value="1"/>
</dbReference>
<name>GPMA_TREDE</name>
<protein>
    <recommendedName>
        <fullName evidence="1">2,3-bisphosphoglycerate-dependent phosphoglycerate mutase</fullName>
        <shortName evidence="1">BPG-dependent PGAM</shortName>
        <shortName evidence="1">PGAM</shortName>
        <shortName evidence="1">Phosphoglyceromutase</shortName>
        <shortName evidence="1">dPGM</shortName>
        <ecNumber evidence="1">5.4.2.11</ecNumber>
    </recommendedName>
</protein>
<feature type="chain" id="PRO_0000179933" description="2,3-bisphosphoglycerate-dependent phosphoglycerate mutase">
    <location>
        <begin position="1"/>
        <end position="247"/>
    </location>
</feature>
<feature type="active site" description="Tele-phosphohistidine intermediate" evidence="1">
    <location>
        <position position="8"/>
    </location>
</feature>
<feature type="active site" description="Proton donor/acceptor" evidence="1">
    <location>
        <position position="86"/>
    </location>
</feature>
<feature type="binding site" evidence="1">
    <location>
        <begin position="7"/>
        <end position="14"/>
    </location>
    <ligand>
        <name>substrate</name>
    </ligand>
</feature>
<feature type="binding site" evidence="1">
    <location>
        <begin position="20"/>
        <end position="21"/>
    </location>
    <ligand>
        <name>substrate</name>
    </ligand>
</feature>
<feature type="binding site" evidence="1">
    <location>
        <position position="59"/>
    </location>
    <ligand>
        <name>substrate</name>
    </ligand>
</feature>
<feature type="binding site" evidence="1">
    <location>
        <begin position="86"/>
        <end position="89"/>
    </location>
    <ligand>
        <name>substrate</name>
    </ligand>
</feature>
<feature type="binding site" evidence="1">
    <location>
        <position position="97"/>
    </location>
    <ligand>
        <name>substrate</name>
    </ligand>
</feature>
<feature type="binding site" evidence="1">
    <location>
        <begin position="113"/>
        <end position="114"/>
    </location>
    <ligand>
        <name>substrate</name>
    </ligand>
</feature>
<feature type="binding site" evidence="1">
    <location>
        <begin position="182"/>
        <end position="183"/>
    </location>
    <ligand>
        <name>substrate</name>
    </ligand>
</feature>
<feature type="site" description="Transition state stabilizer" evidence="1">
    <location>
        <position position="181"/>
    </location>
</feature>
<reference key="1">
    <citation type="journal article" date="2004" name="Proc. Natl. Acad. Sci. U.S.A.">
        <title>Comparison of the genome of the oral pathogen Treponema denticola with other spirochete genomes.</title>
        <authorList>
            <person name="Seshadri R."/>
            <person name="Myers G.S.A."/>
            <person name="Tettelin H."/>
            <person name="Eisen J.A."/>
            <person name="Heidelberg J.F."/>
            <person name="Dodson R.J."/>
            <person name="Davidsen T.M."/>
            <person name="DeBoy R.T."/>
            <person name="Fouts D.E."/>
            <person name="Haft D.H."/>
            <person name="Selengut J."/>
            <person name="Ren Q."/>
            <person name="Brinkac L.M."/>
            <person name="Madupu R."/>
            <person name="Kolonay J.F."/>
            <person name="Durkin S.A."/>
            <person name="Daugherty S.C."/>
            <person name="Shetty J."/>
            <person name="Shvartsbeyn A."/>
            <person name="Gebregeorgis E."/>
            <person name="Geer K."/>
            <person name="Tsegaye G."/>
            <person name="Malek J.A."/>
            <person name="Ayodeji B."/>
            <person name="Shatsman S."/>
            <person name="McLeod M.P."/>
            <person name="Smajs D."/>
            <person name="Howell J.K."/>
            <person name="Pal S."/>
            <person name="Amin A."/>
            <person name="Vashisth P."/>
            <person name="McNeill T.Z."/>
            <person name="Xiang Q."/>
            <person name="Sodergren E."/>
            <person name="Baca E."/>
            <person name="Weinstock G.M."/>
            <person name="Norris S.J."/>
            <person name="Fraser C.M."/>
            <person name="Paulsen I.T."/>
        </authorList>
    </citation>
    <scope>NUCLEOTIDE SEQUENCE [LARGE SCALE GENOMIC DNA]</scope>
    <source>
        <strain>ATCC 35405 / DSM 14222 / CIP 103919 / JCM 8153 / KCTC 15104</strain>
    </source>
</reference>
<organism>
    <name type="scientific">Treponema denticola (strain ATCC 35405 / DSM 14222 / CIP 103919 / JCM 8153 / KCTC 15104)</name>
    <dbReference type="NCBI Taxonomy" id="243275"/>
    <lineage>
        <taxon>Bacteria</taxon>
        <taxon>Pseudomonadati</taxon>
        <taxon>Spirochaetota</taxon>
        <taxon>Spirochaetia</taxon>
        <taxon>Spirochaetales</taxon>
        <taxon>Treponemataceae</taxon>
        <taxon>Treponema</taxon>
    </lineage>
</organism>
<evidence type="ECO:0000255" key="1">
    <source>
        <dbReference type="HAMAP-Rule" id="MF_01039"/>
    </source>
</evidence>
<keyword id="KW-0312">Gluconeogenesis</keyword>
<keyword id="KW-0324">Glycolysis</keyword>
<keyword id="KW-0413">Isomerase</keyword>
<keyword id="KW-1185">Reference proteome</keyword>
<proteinExistence type="inferred from homology"/>
<accession>Q73M14</accession>
<gene>
    <name evidence="1" type="primary">gpmA</name>
    <name type="synonym">gpm</name>
    <name type="ordered locus">TDE_1697</name>
</gene>
<sequence length="247" mass="28592">MRLVLVRHGESEWNKLNLFTGWTDVDLSEKGVEEAKEGGTYLKKEGFDFDICYTSYLKRAIHTLNYILSQMDREWLPVIKTWKLNERHYGGLQGLNKAETAEKYGEDQVKIWRRSFDIAPPVLEEGDKRCPYLQEQYRGIEKSELPLTESLKDTIARAVPFFEKTIKPQMLEGKRILITAHGNSLRALVKYFENLSDEEIISVNIPTGVPLVYEFDKNFKVLSKRYLGDQEKINAKINAVANQGKKK</sequence>